<feature type="chain" id="PRO_0000217650" description="Subtilisin-chymotrypsin inhibitor-2B">
    <location>
        <begin position="1" status="less than"/>
        <end position="72"/>
    </location>
</feature>
<feature type="site" description="Reactive bond">
    <location>
        <begin position="48"/>
        <end position="49"/>
    </location>
</feature>
<feature type="non-terminal residue">
    <location>
        <position position="1"/>
    </location>
</feature>
<proteinExistence type="evidence at transcript level"/>
<evidence type="ECO:0000305" key="1"/>
<keyword id="KW-0646">Protease inhibitor</keyword>
<keyword id="KW-0722">Serine protease inhibitor</keyword>
<accession>P08626</accession>
<reference key="1">
    <citation type="journal article" date="1987" name="Eur. J. Biochem.">
        <title>Nucleotide sequence of barley chymotrypsin inhibitor-2 (CI-2) and its expression in normal and high-lysine barley.</title>
        <authorList>
            <person name="Williamson M.S."/>
            <person name="Forde J."/>
            <person name="Buxton B."/>
            <person name="Kreis M."/>
        </authorList>
    </citation>
    <scope>NUCLEOTIDE SEQUENCE [MRNA]</scope>
    <source>
        <strain>cv. Hiproly</strain>
        <strain>cv. Sundance</strain>
    </source>
</reference>
<organism>
    <name type="scientific">Hordeum vulgare</name>
    <name type="common">Barley</name>
    <dbReference type="NCBI Taxonomy" id="4513"/>
    <lineage>
        <taxon>Eukaryota</taxon>
        <taxon>Viridiplantae</taxon>
        <taxon>Streptophyta</taxon>
        <taxon>Embryophyta</taxon>
        <taxon>Tracheophyta</taxon>
        <taxon>Spermatophyta</taxon>
        <taxon>Magnoliopsida</taxon>
        <taxon>Liliopsida</taxon>
        <taxon>Poales</taxon>
        <taxon>Poaceae</taxon>
        <taxon>BOP clade</taxon>
        <taxon>Pooideae</taxon>
        <taxon>Triticodae</taxon>
        <taxon>Triticeae</taxon>
        <taxon>Hordeinae</taxon>
        <taxon>Hordeum</taxon>
    </lineage>
</organism>
<dbReference type="EMBL" id="X05405">
    <property type="protein sequence ID" value="CAA28989.1"/>
    <property type="molecule type" value="mRNA"/>
</dbReference>
<dbReference type="PIR" id="B29537">
    <property type="entry name" value="B29537"/>
</dbReference>
<dbReference type="SMR" id="P08626"/>
<dbReference type="MEROPS" id="I13.003"/>
<dbReference type="ExpressionAtlas" id="P08626">
    <property type="expression patterns" value="baseline"/>
</dbReference>
<dbReference type="GO" id="GO:0004867">
    <property type="term" value="F:serine-type endopeptidase inhibitor activity"/>
    <property type="evidence" value="ECO:0007669"/>
    <property type="project" value="UniProtKB-KW"/>
</dbReference>
<dbReference type="GO" id="GO:0009611">
    <property type="term" value="P:response to wounding"/>
    <property type="evidence" value="ECO:0007669"/>
    <property type="project" value="InterPro"/>
</dbReference>
<dbReference type="Gene3D" id="3.30.10.10">
    <property type="entry name" value="Trypsin Inhibitor V, subunit A"/>
    <property type="match status" value="1"/>
</dbReference>
<dbReference type="InterPro" id="IPR000864">
    <property type="entry name" value="Prot_inh_pot1"/>
</dbReference>
<dbReference type="InterPro" id="IPR036354">
    <property type="entry name" value="Prot_inh_pot1_sf"/>
</dbReference>
<dbReference type="PANTHER" id="PTHR33091">
    <property type="entry name" value="PROTEIN, PUTATIVE, EXPRESSED-RELATED"/>
    <property type="match status" value="1"/>
</dbReference>
<dbReference type="PANTHER" id="PTHR33091:SF55">
    <property type="entry name" value="SUBTILISIN-CHYMOTRYPSIN INHIBITOR WSCI"/>
    <property type="match status" value="1"/>
</dbReference>
<dbReference type="Pfam" id="PF00280">
    <property type="entry name" value="potato_inhibit"/>
    <property type="match status" value="1"/>
</dbReference>
<dbReference type="PRINTS" id="PR00292">
    <property type="entry name" value="POTATOINHBTR"/>
</dbReference>
<dbReference type="SUPFAM" id="SSF54654">
    <property type="entry name" value="CI-2 family of serine protease inhibitors"/>
    <property type="match status" value="1"/>
</dbReference>
<name>ICI3_HORVU</name>
<protein>
    <recommendedName>
        <fullName>Subtilisin-chymotrypsin inhibitor-2B</fullName>
        <shortName>CI-2B</shortName>
    </recommendedName>
</protein>
<sequence length="72" mass="8296">DCLCDCQNQKTEWPELVEKSVEEAKKVILQDKPEAQIIVLPVGTIVTMEYRIDRVRLFVDRLDNIAQVPRVG</sequence>
<comment type="function">
    <text>Inhibits both subtilisin and chymotrypsin.</text>
</comment>
<comment type="similarity">
    <text evidence="1">Belongs to the protease inhibitor I13 (potato type I serine protease inhibitor) family.</text>
</comment>